<dbReference type="EC" id="2.6.1.9"/>
<dbReference type="EMBL" id="BX640436">
    <property type="protein sequence ID" value="CAE39547.1"/>
    <property type="molecule type" value="Genomic_DNA"/>
</dbReference>
<dbReference type="RefSeq" id="WP_010929470.1">
    <property type="nucleotide sequence ID" value="NC_002928.3"/>
</dbReference>
<dbReference type="SMR" id="Q7W2Y3"/>
<dbReference type="GeneID" id="93206065"/>
<dbReference type="KEGG" id="bpa:BPP4268"/>
<dbReference type="HOGENOM" id="CLU_017584_3_1_4"/>
<dbReference type="UniPathway" id="UPA00031">
    <property type="reaction ID" value="UER00012"/>
</dbReference>
<dbReference type="Proteomes" id="UP000001421">
    <property type="component" value="Chromosome"/>
</dbReference>
<dbReference type="GO" id="GO:0004400">
    <property type="term" value="F:histidinol-phosphate transaminase activity"/>
    <property type="evidence" value="ECO:0007669"/>
    <property type="project" value="UniProtKB-UniRule"/>
</dbReference>
<dbReference type="GO" id="GO:0030170">
    <property type="term" value="F:pyridoxal phosphate binding"/>
    <property type="evidence" value="ECO:0007669"/>
    <property type="project" value="InterPro"/>
</dbReference>
<dbReference type="GO" id="GO:0000105">
    <property type="term" value="P:L-histidine biosynthetic process"/>
    <property type="evidence" value="ECO:0007669"/>
    <property type="project" value="UniProtKB-UniRule"/>
</dbReference>
<dbReference type="CDD" id="cd00609">
    <property type="entry name" value="AAT_like"/>
    <property type="match status" value="1"/>
</dbReference>
<dbReference type="Gene3D" id="3.90.1150.10">
    <property type="entry name" value="Aspartate Aminotransferase, domain 1"/>
    <property type="match status" value="1"/>
</dbReference>
<dbReference type="Gene3D" id="3.40.640.10">
    <property type="entry name" value="Type I PLP-dependent aspartate aminotransferase-like (Major domain)"/>
    <property type="match status" value="1"/>
</dbReference>
<dbReference type="HAMAP" id="MF_01023">
    <property type="entry name" value="HisC_aminotrans_2"/>
    <property type="match status" value="1"/>
</dbReference>
<dbReference type="InterPro" id="IPR004839">
    <property type="entry name" value="Aminotransferase_I/II_large"/>
</dbReference>
<dbReference type="InterPro" id="IPR005861">
    <property type="entry name" value="HisP_aminotrans"/>
</dbReference>
<dbReference type="InterPro" id="IPR015424">
    <property type="entry name" value="PyrdxlP-dep_Trfase"/>
</dbReference>
<dbReference type="InterPro" id="IPR015421">
    <property type="entry name" value="PyrdxlP-dep_Trfase_major"/>
</dbReference>
<dbReference type="InterPro" id="IPR015422">
    <property type="entry name" value="PyrdxlP-dep_Trfase_small"/>
</dbReference>
<dbReference type="NCBIfam" id="TIGR01141">
    <property type="entry name" value="hisC"/>
    <property type="match status" value="1"/>
</dbReference>
<dbReference type="PANTHER" id="PTHR42885:SF2">
    <property type="entry name" value="HISTIDINOL-PHOSPHATE AMINOTRANSFERASE"/>
    <property type="match status" value="1"/>
</dbReference>
<dbReference type="PANTHER" id="PTHR42885">
    <property type="entry name" value="HISTIDINOL-PHOSPHATE AMINOTRANSFERASE-RELATED"/>
    <property type="match status" value="1"/>
</dbReference>
<dbReference type="Pfam" id="PF00155">
    <property type="entry name" value="Aminotran_1_2"/>
    <property type="match status" value="1"/>
</dbReference>
<dbReference type="SUPFAM" id="SSF53383">
    <property type="entry name" value="PLP-dependent transferases"/>
    <property type="match status" value="1"/>
</dbReference>
<feature type="chain" id="PRO_0000153322" description="Histidinol-phosphate aminotransferase 2">
    <location>
        <begin position="1"/>
        <end position="365"/>
    </location>
</feature>
<feature type="modified residue" description="N6-(pyridoxal phosphate)lysine" evidence="1">
    <location>
        <position position="222"/>
    </location>
</feature>
<proteinExistence type="inferred from homology"/>
<name>HIS82_BORPA</name>
<sequence length="365" mass="38966">MTGVAAPERIARAVRADIRALTAYPVADAAGCIKLDAMECPYELPAEVRDDIARAARETPLNRYPAAANPALQAQVRQAFEVPAQAGLLFGNGSDELIHLIIQACCEPGDTVLSPWPSFVYFDMAARLSHARFVGVPLTAGLELDLPATLAAIEAHQPKVVFLALPNNPTGGLWPDAAVRAILDAAPGLVVLDEAYQPFAGHTWMPRIMDEPNAVVMRTVSKIGLAGLRFGYLAGHPAWIAEFDKVRPPYNMDVLSQAVLAAVLRHKPVLDAQADRLHADRQPLADGLAALPGVTVFPSAGNFVLARFCGKLDGNAVHLALKTRKILVRNFSNAHPLLADCLRISVGTPTENAAVLSALQDILSA</sequence>
<comment type="catalytic activity">
    <reaction>
        <text>L-histidinol phosphate + 2-oxoglutarate = 3-(imidazol-4-yl)-2-oxopropyl phosphate + L-glutamate</text>
        <dbReference type="Rhea" id="RHEA:23744"/>
        <dbReference type="ChEBI" id="CHEBI:16810"/>
        <dbReference type="ChEBI" id="CHEBI:29985"/>
        <dbReference type="ChEBI" id="CHEBI:57766"/>
        <dbReference type="ChEBI" id="CHEBI:57980"/>
        <dbReference type="EC" id="2.6.1.9"/>
    </reaction>
</comment>
<comment type="cofactor">
    <cofactor evidence="1">
        <name>pyridoxal 5'-phosphate</name>
        <dbReference type="ChEBI" id="CHEBI:597326"/>
    </cofactor>
</comment>
<comment type="pathway">
    <text>Amino-acid biosynthesis; L-histidine biosynthesis; L-histidine from 5-phospho-alpha-D-ribose 1-diphosphate: step 7/9.</text>
</comment>
<comment type="subunit">
    <text evidence="1">Homodimer.</text>
</comment>
<comment type="similarity">
    <text evidence="2">Belongs to the class-II pyridoxal-phosphate-dependent aminotransferase family. Histidinol-phosphate aminotransferase subfamily.</text>
</comment>
<gene>
    <name type="primary">hisC2</name>
    <name type="ordered locus">BPP4268</name>
</gene>
<organism>
    <name type="scientific">Bordetella parapertussis (strain 12822 / ATCC BAA-587 / NCTC 13253)</name>
    <dbReference type="NCBI Taxonomy" id="257311"/>
    <lineage>
        <taxon>Bacteria</taxon>
        <taxon>Pseudomonadati</taxon>
        <taxon>Pseudomonadota</taxon>
        <taxon>Betaproteobacteria</taxon>
        <taxon>Burkholderiales</taxon>
        <taxon>Alcaligenaceae</taxon>
        <taxon>Bordetella</taxon>
    </lineage>
</organism>
<keyword id="KW-0028">Amino-acid biosynthesis</keyword>
<keyword id="KW-0032">Aminotransferase</keyword>
<keyword id="KW-0368">Histidine biosynthesis</keyword>
<keyword id="KW-0663">Pyridoxal phosphate</keyword>
<keyword id="KW-0808">Transferase</keyword>
<accession>Q7W2Y3</accession>
<reference key="1">
    <citation type="journal article" date="2003" name="Nat. Genet.">
        <title>Comparative analysis of the genome sequences of Bordetella pertussis, Bordetella parapertussis and Bordetella bronchiseptica.</title>
        <authorList>
            <person name="Parkhill J."/>
            <person name="Sebaihia M."/>
            <person name="Preston A."/>
            <person name="Murphy L.D."/>
            <person name="Thomson N.R."/>
            <person name="Harris D.E."/>
            <person name="Holden M.T.G."/>
            <person name="Churcher C.M."/>
            <person name="Bentley S.D."/>
            <person name="Mungall K.L."/>
            <person name="Cerdeno-Tarraga A.-M."/>
            <person name="Temple L."/>
            <person name="James K.D."/>
            <person name="Harris B."/>
            <person name="Quail M.A."/>
            <person name="Achtman M."/>
            <person name="Atkin R."/>
            <person name="Baker S."/>
            <person name="Basham D."/>
            <person name="Bason N."/>
            <person name="Cherevach I."/>
            <person name="Chillingworth T."/>
            <person name="Collins M."/>
            <person name="Cronin A."/>
            <person name="Davis P."/>
            <person name="Doggett J."/>
            <person name="Feltwell T."/>
            <person name="Goble A."/>
            <person name="Hamlin N."/>
            <person name="Hauser H."/>
            <person name="Holroyd S."/>
            <person name="Jagels K."/>
            <person name="Leather S."/>
            <person name="Moule S."/>
            <person name="Norberczak H."/>
            <person name="O'Neil S."/>
            <person name="Ormond D."/>
            <person name="Price C."/>
            <person name="Rabbinowitsch E."/>
            <person name="Rutter S."/>
            <person name="Sanders M."/>
            <person name="Saunders D."/>
            <person name="Seeger K."/>
            <person name="Sharp S."/>
            <person name="Simmonds M."/>
            <person name="Skelton J."/>
            <person name="Squares R."/>
            <person name="Squares S."/>
            <person name="Stevens K."/>
            <person name="Unwin L."/>
            <person name="Whitehead S."/>
            <person name="Barrell B.G."/>
            <person name="Maskell D.J."/>
        </authorList>
    </citation>
    <scope>NUCLEOTIDE SEQUENCE [LARGE SCALE GENOMIC DNA]</scope>
    <source>
        <strain>12822 / ATCC BAA-587 / NCTC 13253</strain>
    </source>
</reference>
<protein>
    <recommendedName>
        <fullName>Histidinol-phosphate aminotransferase 2</fullName>
        <ecNumber>2.6.1.9</ecNumber>
    </recommendedName>
    <alternativeName>
        <fullName>Imidazole acetol-phosphate transaminase 2</fullName>
    </alternativeName>
</protein>
<evidence type="ECO:0000250" key="1"/>
<evidence type="ECO:0000305" key="2"/>